<dbReference type="EMBL" id="CP000702">
    <property type="protein sequence ID" value="ABQ46107.1"/>
    <property type="molecule type" value="Genomic_DNA"/>
</dbReference>
<dbReference type="RefSeq" id="WP_011942781.1">
    <property type="nucleotide sequence ID" value="NC_009486.1"/>
</dbReference>
<dbReference type="SMR" id="A5IIT4"/>
<dbReference type="STRING" id="390874.Tpet_0078"/>
<dbReference type="KEGG" id="tpt:Tpet_0078"/>
<dbReference type="eggNOG" id="COG0484">
    <property type="taxonomic scope" value="Bacteria"/>
</dbReference>
<dbReference type="HOGENOM" id="CLU_017633_0_7_0"/>
<dbReference type="Proteomes" id="UP000006558">
    <property type="component" value="Chromosome"/>
</dbReference>
<dbReference type="GO" id="GO:0005737">
    <property type="term" value="C:cytoplasm"/>
    <property type="evidence" value="ECO:0007669"/>
    <property type="project" value="UniProtKB-SubCell"/>
</dbReference>
<dbReference type="GO" id="GO:0005524">
    <property type="term" value="F:ATP binding"/>
    <property type="evidence" value="ECO:0007669"/>
    <property type="project" value="InterPro"/>
</dbReference>
<dbReference type="GO" id="GO:0031072">
    <property type="term" value="F:heat shock protein binding"/>
    <property type="evidence" value="ECO:0007669"/>
    <property type="project" value="InterPro"/>
</dbReference>
<dbReference type="GO" id="GO:0051082">
    <property type="term" value="F:unfolded protein binding"/>
    <property type="evidence" value="ECO:0007669"/>
    <property type="project" value="UniProtKB-UniRule"/>
</dbReference>
<dbReference type="GO" id="GO:0008270">
    <property type="term" value="F:zinc ion binding"/>
    <property type="evidence" value="ECO:0007669"/>
    <property type="project" value="UniProtKB-UniRule"/>
</dbReference>
<dbReference type="GO" id="GO:0051085">
    <property type="term" value="P:chaperone cofactor-dependent protein refolding"/>
    <property type="evidence" value="ECO:0007669"/>
    <property type="project" value="TreeGrafter"/>
</dbReference>
<dbReference type="GO" id="GO:0006260">
    <property type="term" value="P:DNA replication"/>
    <property type="evidence" value="ECO:0007669"/>
    <property type="project" value="UniProtKB-KW"/>
</dbReference>
<dbReference type="GO" id="GO:0042026">
    <property type="term" value="P:protein refolding"/>
    <property type="evidence" value="ECO:0007669"/>
    <property type="project" value="TreeGrafter"/>
</dbReference>
<dbReference type="GO" id="GO:0009408">
    <property type="term" value="P:response to heat"/>
    <property type="evidence" value="ECO:0007669"/>
    <property type="project" value="InterPro"/>
</dbReference>
<dbReference type="CDD" id="cd06257">
    <property type="entry name" value="DnaJ"/>
    <property type="match status" value="1"/>
</dbReference>
<dbReference type="CDD" id="cd10747">
    <property type="entry name" value="DnaJ_C"/>
    <property type="match status" value="1"/>
</dbReference>
<dbReference type="CDD" id="cd10719">
    <property type="entry name" value="DnaJ_zf"/>
    <property type="match status" value="1"/>
</dbReference>
<dbReference type="FunFam" id="1.10.287.110:FF:000034">
    <property type="entry name" value="Chaperone protein DnaJ"/>
    <property type="match status" value="1"/>
</dbReference>
<dbReference type="FunFam" id="2.60.260.20:FF:000005">
    <property type="entry name" value="Chaperone protein dnaJ 1, mitochondrial"/>
    <property type="match status" value="1"/>
</dbReference>
<dbReference type="FunFam" id="2.10.230.10:FF:000002">
    <property type="entry name" value="Molecular chaperone DnaJ"/>
    <property type="match status" value="1"/>
</dbReference>
<dbReference type="Gene3D" id="6.20.20.10">
    <property type="match status" value="2"/>
</dbReference>
<dbReference type="Gene3D" id="1.10.287.110">
    <property type="entry name" value="DnaJ domain"/>
    <property type="match status" value="1"/>
</dbReference>
<dbReference type="Gene3D" id="2.60.260.20">
    <property type="entry name" value="Urease metallochaperone UreE, N-terminal domain"/>
    <property type="match status" value="2"/>
</dbReference>
<dbReference type="HAMAP" id="MF_01152">
    <property type="entry name" value="DnaJ"/>
    <property type="match status" value="1"/>
</dbReference>
<dbReference type="InterPro" id="IPR012724">
    <property type="entry name" value="DnaJ"/>
</dbReference>
<dbReference type="InterPro" id="IPR002939">
    <property type="entry name" value="DnaJ_C"/>
</dbReference>
<dbReference type="InterPro" id="IPR001623">
    <property type="entry name" value="DnaJ_domain"/>
</dbReference>
<dbReference type="InterPro" id="IPR018253">
    <property type="entry name" value="DnaJ_domain_CS"/>
</dbReference>
<dbReference type="InterPro" id="IPR008971">
    <property type="entry name" value="HSP40/DnaJ_pept-bd"/>
</dbReference>
<dbReference type="InterPro" id="IPR001305">
    <property type="entry name" value="HSP_DnaJ_Cys-rich_dom"/>
</dbReference>
<dbReference type="InterPro" id="IPR036410">
    <property type="entry name" value="HSP_DnaJ_Cys-rich_dom_sf"/>
</dbReference>
<dbReference type="InterPro" id="IPR036869">
    <property type="entry name" value="J_dom_sf"/>
</dbReference>
<dbReference type="NCBIfam" id="TIGR02349">
    <property type="entry name" value="DnaJ_bact"/>
    <property type="match status" value="1"/>
</dbReference>
<dbReference type="NCBIfam" id="NF008035">
    <property type="entry name" value="PRK10767.1"/>
    <property type="match status" value="1"/>
</dbReference>
<dbReference type="NCBIfam" id="NF010875">
    <property type="entry name" value="PRK14282.1"/>
    <property type="match status" value="1"/>
</dbReference>
<dbReference type="PANTHER" id="PTHR43096">
    <property type="entry name" value="DNAJ HOMOLOG 1, MITOCHONDRIAL-RELATED"/>
    <property type="match status" value="1"/>
</dbReference>
<dbReference type="PANTHER" id="PTHR43096:SF52">
    <property type="entry name" value="DNAJ HOMOLOG 1, MITOCHONDRIAL-RELATED"/>
    <property type="match status" value="1"/>
</dbReference>
<dbReference type="Pfam" id="PF00226">
    <property type="entry name" value="DnaJ"/>
    <property type="match status" value="1"/>
</dbReference>
<dbReference type="Pfam" id="PF01556">
    <property type="entry name" value="DnaJ_C"/>
    <property type="match status" value="1"/>
</dbReference>
<dbReference type="Pfam" id="PF00684">
    <property type="entry name" value="DnaJ_CXXCXGXG"/>
    <property type="match status" value="1"/>
</dbReference>
<dbReference type="PRINTS" id="PR00625">
    <property type="entry name" value="JDOMAIN"/>
</dbReference>
<dbReference type="SMART" id="SM00271">
    <property type="entry name" value="DnaJ"/>
    <property type="match status" value="1"/>
</dbReference>
<dbReference type="SUPFAM" id="SSF46565">
    <property type="entry name" value="Chaperone J-domain"/>
    <property type="match status" value="1"/>
</dbReference>
<dbReference type="SUPFAM" id="SSF57938">
    <property type="entry name" value="DnaJ/Hsp40 cysteine-rich domain"/>
    <property type="match status" value="1"/>
</dbReference>
<dbReference type="SUPFAM" id="SSF49493">
    <property type="entry name" value="HSP40/DnaJ peptide-binding domain"/>
    <property type="match status" value="2"/>
</dbReference>
<dbReference type="PROSITE" id="PS00636">
    <property type="entry name" value="DNAJ_1"/>
    <property type="match status" value="1"/>
</dbReference>
<dbReference type="PROSITE" id="PS50076">
    <property type="entry name" value="DNAJ_2"/>
    <property type="match status" value="1"/>
</dbReference>
<dbReference type="PROSITE" id="PS51188">
    <property type="entry name" value="ZF_CR"/>
    <property type="match status" value="1"/>
</dbReference>
<protein>
    <recommendedName>
        <fullName evidence="1">Chaperone protein DnaJ</fullName>
    </recommendedName>
</protein>
<name>DNAJ_THEP1</name>
<accession>A5IIT4</accession>
<reference key="1">
    <citation type="submission" date="2007-05" db="EMBL/GenBank/DDBJ databases">
        <title>Complete sequence of Thermotoga petrophila RKU-1.</title>
        <authorList>
            <consortium name="US DOE Joint Genome Institute"/>
            <person name="Copeland A."/>
            <person name="Lucas S."/>
            <person name="Lapidus A."/>
            <person name="Barry K."/>
            <person name="Glavina del Rio T."/>
            <person name="Dalin E."/>
            <person name="Tice H."/>
            <person name="Pitluck S."/>
            <person name="Sims D."/>
            <person name="Brettin T."/>
            <person name="Bruce D."/>
            <person name="Detter J.C."/>
            <person name="Han C."/>
            <person name="Tapia R."/>
            <person name="Schmutz J."/>
            <person name="Larimer F."/>
            <person name="Land M."/>
            <person name="Hauser L."/>
            <person name="Kyrpides N."/>
            <person name="Mikhailova N."/>
            <person name="Nelson K."/>
            <person name="Gogarten J.P."/>
            <person name="Noll K."/>
            <person name="Richardson P."/>
        </authorList>
    </citation>
    <scope>NUCLEOTIDE SEQUENCE [LARGE SCALE GENOMIC DNA]</scope>
    <source>
        <strain>ATCC BAA-488 / DSM 13995 / JCM 10881 / RKU-1</strain>
    </source>
</reference>
<sequence length="369" mass="42236">MKREKKDYYEILGVPRDATQEEIKRAYKRLVKEWHPDRHPENRKEAEQRFKEIQEAYEVLSDPQKRAMYDRFGYVGEQPTYQETESGGFFEDIFKEFENIFNRDIFDVFFGERPGQEEKREYARRGEDIRYEIEVTLSDLINGAEIPVEYERYETCPRCGGTGVEPNAGYINCPSCGGTGRIREERRSFFGYFVSERTCERCGGTGKIPREYCHECGGSGRVLRKVRRTVKIPPNVEDGTQLRITGGGNAGYYGGPYGDLIVIVRVKPDPRFKKSGSDLVYDVTIDYLQAILGTTVEVPLPEGGTTMLKIPPGTQPETVFRLKGKGLPNRYGRRGDLIVNVHVEIPKTLSREERKVLEDLAKKRGVTIG</sequence>
<feature type="chain" id="PRO_1000085322" description="Chaperone protein DnaJ">
    <location>
        <begin position="1"/>
        <end position="369"/>
    </location>
</feature>
<feature type="domain" description="J" evidence="1">
    <location>
        <begin position="7"/>
        <end position="73"/>
    </location>
</feature>
<feature type="repeat" description="CXXCXGXG motif">
    <location>
        <begin position="156"/>
        <end position="163"/>
    </location>
</feature>
<feature type="repeat" description="CXXCXGXG motif">
    <location>
        <begin position="173"/>
        <end position="180"/>
    </location>
</feature>
<feature type="repeat" description="CXXCXGXG motif">
    <location>
        <begin position="199"/>
        <end position="206"/>
    </location>
</feature>
<feature type="repeat" description="CXXCXGXG motif">
    <location>
        <begin position="213"/>
        <end position="220"/>
    </location>
</feature>
<feature type="zinc finger region" description="CR-type" evidence="1">
    <location>
        <begin position="143"/>
        <end position="225"/>
    </location>
</feature>
<feature type="binding site" evidence="1">
    <location>
        <position position="156"/>
    </location>
    <ligand>
        <name>Zn(2+)</name>
        <dbReference type="ChEBI" id="CHEBI:29105"/>
        <label>1</label>
    </ligand>
</feature>
<feature type="binding site" evidence="1">
    <location>
        <position position="159"/>
    </location>
    <ligand>
        <name>Zn(2+)</name>
        <dbReference type="ChEBI" id="CHEBI:29105"/>
        <label>1</label>
    </ligand>
</feature>
<feature type="binding site" evidence="1">
    <location>
        <position position="173"/>
    </location>
    <ligand>
        <name>Zn(2+)</name>
        <dbReference type="ChEBI" id="CHEBI:29105"/>
        <label>2</label>
    </ligand>
</feature>
<feature type="binding site" evidence="1">
    <location>
        <position position="176"/>
    </location>
    <ligand>
        <name>Zn(2+)</name>
        <dbReference type="ChEBI" id="CHEBI:29105"/>
        <label>2</label>
    </ligand>
</feature>
<feature type="binding site" evidence="1">
    <location>
        <position position="199"/>
    </location>
    <ligand>
        <name>Zn(2+)</name>
        <dbReference type="ChEBI" id="CHEBI:29105"/>
        <label>2</label>
    </ligand>
</feature>
<feature type="binding site" evidence="1">
    <location>
        <position position="202"/>
    </location>
    <ligand>
        <name>Zn(2+)</name>
        <dbReference type="ChEBI" id="CHEBI:29105"/>
        <label>2</label>
    </ligand>
</feature>
<feature type="binding site" evidence="1">
    <location>
        <position position="213"/>
    </location>
    <ligand>
        <name>Zn(2+)</name>
        <dbReference type="ChEBI" id="CHEBI:29105"/>
        <label>1</label>
    </ligand>
</feature>
<feature type="binding site" evidence="1">
    <location>
        <position position="216"/>
    </location>
    <ligand>
        <name>Zn(2+)</name>
        <dbReference type="ChEBI" id="CHEBI:29105"/>
        <label>1</label>
    </ligand>
</feature>
<keyword id="KW-0143">Chaperone</keyword>
<keyword id="KW-0963">Cytoplasm</keyword>
<keyword id="KW-0235">DNA replication</keyword>
<keyword id="KW-0479">Metal-binding</keyword>
<keyword id="KW-0677">Repeat</keyword>
<keyword id="KW-0346">Stress response</keyword>
<keyword id="KW-0862">Zinc</keyword>
<keyword id="KW-0863">Zinc-finger</keyword>
<comment type="function">
    <text evidence="1">Participates actively in the response to hyperosmotic and heat shock by preventing the aggregation of stress-denatured proteins and by disaggregating proteins, also in an autonomous, DnaK-independent fashion. Unfolded proteins bind initially to DnaJ; upon interaction with the DnaJ-bound protein, DnaK hydrolyzes its bound ATP, resulting in the formation of a stable complex. GrpE releases ADP from DnaK; ATP binding to DnaK triggers the release of the substrate protein, thus completing the reaction cycle. Several rounds of ATP-dependent interactions between DnaJ, DnaK and GrpE are required for fully efficient folding. Also involved, together with DnaK and GrpE, in the DNA replication of plasmids through activation of initiation proteins.</text>
</comment>
<comment type="cofactor">
    <cofactor evidence="1">
        <name>Zn(2+)</name>
        <dbReference type="ChEBI" id="CHEBI:29105"/>
    </cofactor>
    <text evidence="1">Binds 2 Zn(2+) ions per monomer.</text>
</comment>
<comment type="subunit">
    <text evidence="1">Homodimer.</text>
</comment>
<comment type="subcellular location">
    <subcellularLocation>
        <location evidence="1">Cytoplasm</location>
    </subcellularLocation>
</comment>
<comment type="domain">
    <text evidence="1">The J domain is necessary and sufficient to stimulate DnaK ATPase activity. Zinc center 1 plays an important role in the autonomous, DnaK-independent chaperone activity of DnaJ. Zinc center 2 is essential for interaction with DnaK and for DnaJ activity.</text>
</comment>
<comment type="similarity">
    <text evidence="1">Belongs to the DnaJ family.</text>
</comment>
<proteinExistence type="inferred from homology"/>
<evidence type="ECO:0000255" key="1">
    <source>
        <dbReference type="HAMAP-Rule" id="MF_01152"/>
    </source>
</evidence>
<organism>
    <name type="scientific">Thermotoga petrophila (strain ATCC BAA-488 / DSM 13995 / JCM 10881 / RKU-1)</name>
    <dbReference type="NCBI Taxonomy" id="390874"/>
    <lineage>
        <taxon>Bacteria</taxon>
        <taxon>Thermotogati</taxon>
        <taxon>Thermotogota</taxon>
        <taxon>Thermotogae</taxon>
        <taxon>Thermotogales</taxon>
        <taxon>Thermotogaceae</taxon>
        <taxon>Thermotoga</taxon>
    </lineage>
</organism>
<gene>
    <name evidence="1" type="primary">dnaJ</name>
    <name type="ordered locus">Tpet_0078</name>
</gene>